<name>END4_STAES</name>
<gene>
    <name evidence="1" type="primary">nfo</name>
    <name type="ordered locus">SE_1244</name>
</gene>
<comment type="function">
    <text evidence="1">Endonuclease IV plays a role in DNA repair. It cleaves phosphodiester bonds at apurinic or apyrimidinic (AP) sites, generating a 3'-hydroxyl group and a 5'-terminal sugar phosphate.</text>
</comment>
<comment type="catalytic activity">
    <reaction evidence="1">
        <text>Endonucleolytic cleavage to 5'-phosphooligonucleotide end-products.</text>
        <dbReference type="EC" id="3.1.21.2"/>
    </reaction>
</comment>
<comment type="cofactor">
    <cofactor evidence="1">
        <name>Zn(2+)</name>
        <dbReference type="ChEBI" id="CHEBI:29105"/>
    </cofactor>
    <text evidence="1">Binds 3 Zn(2+) ions.</text>
</comment>
<comment type="similarity">
    <text evidence="1">Belongs to the AP endonuclease 2 family.</text>
</comment>
<evidence type="ECO:0000255" key="1">
    <source>
        <dbReference type="HAMAP-Rule" id="MF_00152"/>
    </source>
</evidence>
<reference key="1">
    <citation type="journal article" date="2003" name="Mol. Microbiol.">
        <title>Genome-based analysis of virulence genes in a non-biofilm-forming Staphylococcus epidermidis strain (ATCC 12228).</title>
        <authorList>
            <person name="Zhang Y.-Q."/>
            <person name="Ren S.-X."/>
            <person name="Li H.-L."/>
            <person name="Wang Y.-X."/>
            <person name="Fu G."/>
            <person name="Yang J."/>
            <person name="Qin Z.-Q."/>
            <person name="Miao Y.-G."/>
            <person name="Wang W.-Y."/>
            <person name="Chen R.-S."/>
            <person name="Shen Y."/>
            <person name="Chen Z."/>
            <person name="Yuan Z.-H."/>
            <person name="Zhao G.-P."/>
            <person name="Qu D."/>
            <person name="Danchin A."/>
            <person name="Wen Y.-M."/>
        </authorList>
    </citation>
    <scope>NUCLEOTIDE SEQUENCE [LARGE SCALE GENOMIC DNA]</scope>
    <source>
        <strain>ATCC 12228 / FDA PCI 1200</strain>
    </source>
</reference>
<dbReference type="EC" id="3.1.21.2" evidence="1"/>
<dbReference type="EMBL" id="AE015929">
    <property type="protein sequence ID" value="AAO04843.1"/>
    <property type="molecule type" value="Genomic_DNA"/>
</dbReference>
<dbReference type="RefSeq" id="NP_764799.1">
    <property type="nucleotide sequence ID" value="NC_004461.1"/>
</dbReference>
<dbReference type="RefSeq" id="WP_002456488.1">
    <property type="nucleotide sequence ID" value="NZ_WBME01000008.1"/>
</dbReference>
<dbReference type="SMR" id="Q8CP25"/>
<dbReference type="KEGG" id="sep:SE_1244"/>
<dbReference type="PATRIC" id="fig|176280.10.peg.1212"/>
<dbReference type="eggNOG" id="COG0648">
    <property type="taxonomic scope" value="Bacteria"/>
</dbReference>
<dbReference type="HOGENOM" id="CLU_025885_4_1_9"/>
<dbReference type="OrthoDB" id="9805666at2"/>
<dbReference type="Proteomes" id="UP000001411">
    <property type="component" value="Chromosome"/>
</dbReference>
<dbReference type="GO" id="GO:0008833">
    <property type="term" value="F:deoxyribonuclease IV (phage-T4-induced) activity"/>
    <property type="evidence" value="ECO:0007669"/>
    <property type="project" value="UniProtKB-UniRule"/>
</dbReference>
<dbReference type="GO" id="GO:0003677">
    <property type="term" value="F:DNA binding"/>
    <property type="evidence" value="ECO:0007669"/>
    <property type="project" value="InterPro"/>
</dbReference>
<dbReference type="GO" id="GO:0003906">
    <property type="term" value="F:DNA-(apurinic or apyrimidinic site) endonuclease activity"/>
    <property type="evidence" value="ECO:0007669"/>
    <property type="project" value="TreeGrafter"/>
</dbReference>
<dbReference type="GO" id="GO:0008081">
    <property type="term" value="F:phosphoric diester hydrolase activity"/>
    <property type="evidence" value="ECO:0007669"/>
    <property type="project" value="TreeGrafter"/>
</dbReference>
<dbReference type="GO" id="GO:0008270">
    <property type="term" value="F:zinc ion binding"/>
    <property type="evidence" value="ECO:0007669"/>
    <property type="project" value="UniProtKB-UniRule"/>
</dbReference>
<dbReference type="GO" id="GO:0006284">
    <property type="term" value="P:base-excision repair"/>
    <property type="evidence" value="ECO:0007669"/>
    <property type="project" value="TreeGrafter"/>
</dbReference>
<dbReference type="CDD" id="cd00019">
    <property type="entry name" value="AP2Ec"/>
    <property type="match status" value="1"/>
</dbReference>
<dbReference type="FunFam" id="3.20.20.150:FF:000001">
    <property type="entry name" value="Probable endonuclease 4"/>
    <property type="match status" value="1"/>
</dbReference>
<dbReference type="Gene3D" id="3.20.20.150">
    <property type="entry name" value="Divalent-metal-dependent TIM barrel enzymes"/>
    <property type="match status" value="1"/>
</dbReference>
<dbReference type="HAMAP" id="MF_00152">
    <property type="entry name" value="Nfo"/>
    <property type="match status" value="1"/>
</dbReference>
<dbReference type="InterPro" id="IPR001719">
    <property type="entry name" value="AP_endonuc_2"/>
</dbReference>
<dbReference type="InterPro" id="IPR018246">
    <property type="entry name" value="AP_endonuc_F2_Zn_BS"/>
</dbReference>
<dbReference type="InterPro" id="IPR036237">
    <property type="entry name" value="Xyl_isomerase-like_sf"/>
</dbReference>
<dbReference type="InterPro" id="IPR013022">
    <property type="entry name" value="Xyl_isomerase-like_TIM-brl"/>
</dbReference>
<dbReference type="NCBIfam" id="TIGR00587">
    <property type="entry name" value="nfo"/>
    <property type="match status" value="1"/>
</dbReference>
<dbReference type="NCBIfam" id="NF002196">
    <property type="entry name" value="PRK01060.1-1"/>
    <property type="match status" value="1"/>
</dbReference>
<dbReference type="PANTHER" id="PTHR21445:SF0">
    <property type="entry name" value="APURINIC-APYRIMIDINIC ENDONUCLEASE"/>
    <property type="match status" value="1"/>
</dbReference>
<dbReference type="PANTHER" id="PTHR21445">
    <property type="entry name" value="ENDONUCLEASE IV ENDODEOXYRIBONUCLEASE IV"/>
    <property type="match status" value="1"/>
</dbReference>
<dbReference type="Pfam" id="PF01261">
    <property type="entry name" value="AP_endonuc_2"/>
    <property type="match status" value="1"/>
</dbReference>
<dbReference type="SMART" id="SM00518">
    <property type="entry name" value="AP2Ec"/>
    <property type="match status" value="1"/>
</dbReference>
<dbReference type="SUPFAM" id="SSF51658">
    <property type="entry name" value="Xylose isomerase-like"/>
    <property type="match status" value="1"/>
</dbReference>
<dbReference type="PROSITE" id="PS00729">
    <property type="entry name" value="AP_NUCLEASE_F2_1"/>
    <property type="match status" value="1"/>
</dbReference>
<dbReference type="PROSITE" id="PS00730">
    <property type="entry name" value="AP_NUCLEASE_F2_2"/>
    <property type="match status" value="1"/>
</dbReference>
<dbReference type="PROSITE" id="PS00731">
    <property type="entry name" value="AP_NUCLEASE_F2_3"/>
    <property type="match status" value="1"/>
</dbReference>
<dbReference type="PROSITE" id="PS51432">
    <property type="entry name" value="AP_NUCLEASE_F2_4"/>
    <property type="match status" value="1"/>
</dbReference>
<organism>
    <name type="scientific">Staphylococcus epidermidis (strain ATCC 12228 / FDA PCI 1200)</name>
    <dbReference type="NCBI Taxonomy" id="176280"/>
    <lineage>
        <taxon>Bacteria</taxon>
        <taxon>Bacillati</taxon>
        <taxon>Bacillota</taxon>
        <taxon>Bacilli</taxon>
        <taxon>Bacillales</taxon>
        <taxon>Staphylococcaceae</taxon>
        <taxon>Staphylococcus</taxon>
    </lineage>
</organism>
<feature type="chain" id="PRO_0000190875" description="Probable endonuclease 4">
    <location>
        <begin position="1"/>
        <end position="296"/>
    </location>
</feature>
<feature type="binding site" evidence="1">
    <location>
        <position position="68"/>
    </location>
    <ligand>
        <name>Zn(2+)</name>
        <dbReference type="ChEBI" id="CHEBI:29105"/>
        <label>1</label>
    </ligand>
</feature>
<feature type="binding site" evidence="1">
    <location>
        <position position="109"/>
    </location>
    <ligand>
        <name>Zn(2+)</name>
        <dbReference type="ChEBI" id="CHEBI:29105"/>
        <label>1</label>
    </ligand>
</feature>
<feature type="binding site" evidence="1">
    <location>
        <position position="144"/>
    </location>
    <ligand>
        <name>Zn(2+)</name>
        <dbReference type="ChEBI" id="CHEBI:29105"/>
        <label>1</label>
    </ligand>
</feature>
<feature type="binding site" evidence="1">
    <location>
        <position position="144"/>
    </location>
    <ligand>
        <name>Zn(2+)</name>
        <dbReference type="ChEBI" id="CHEBI:29105"/>
        <label>2</label>
    </ligand>
</feature>
<feature type="binding site" evidence="1">
    <location>
        <position position="178"/>
    </location>
    <ligand>
        <name>Zn(2+)</name>
        <dbReference type="ChEBI" id="CHEBI:29105"/>
        <label>2</label>
    </ligand>
</feature>
<feature type="binding site" evidence="1">
    <location>
        <position position="181"/>
    </location>
    <ligand>
        <name>Zn(2+)</name>
        <dbReference type="ChEBI" id="CHEBI:29105"/>
        <label>3</label>
    </ligand>
</feature>
<feature type="binding site" evidence="1">
    <location>
        <position position="213"/>
    </location>
    <ligand>
        <name>Zn(2+)</name>
        <dbReference type="ChEBI" id="CHEBI:29105"/>
        <label>2</label>
    </ligand>
</feature>
<feature type="binding site" evidence="1">
    <location>
        <position position="226"/>
    </location>
    <ligand>
        <name>Zn(2+)</name>
        <dbReference type="ChEBI" id="CHEBI:29105"/>
        <label>3</label>
    </ligand>
</feature>
<feature type="binding site" evidence="1">
    <location>
        <position position="228"/>
    </location>
    <ligand>
        <name>Zn(2+)</name>
        <dbReference type="ChEBI" id="CHEBI:29105"/>
        <label>3</label>
    </ligand>
</feature>
<feature type="binding site" evidence="1">
    <location>
        <position position="258"/>
    </location>
    <ligand>
        <name>Zn(2+)</name>
        <dbReference type="ChEBI" id="CHEBI:29105"/>
        <label>2</label>
    </ligand>
</feature>
<protein>
    <recommendedName>
        <fullName evidence="1">Probable endonuclease 4</fullName>
        <ecNumber evidence="1">3.1.21.2</ecNumber>
    </recommendedName>
    <alternativeName>
        <fullName evidence="1">Endodeoxyribonuclease IV</fullName>
    </alternativeName>
    <alternativeName>
        <fullName evidence="1">Endonuclease IV</fullName>
    </alternativeName>
</protein>
<accession>Q8CP25</accession>
<sequence length="296" mass="33030">MLIGSHVSMSGKKMLQGSAEEAHKYGESTFMIYTGAPQNTRRKNIEDLNIEKGQQAMKTYGLSNIVVHAPYIINIANTTKPEVFNLGVDFLQKEIERTQALGAKDIVLHPGAHVGAGVDKGIQKIIEGLNEVLTHDNDVRIALETMAGKGTEVGRSFEEIAQIIDGVTHNDRLSVCFDTCHTHDAGYNVKEDFDGVLEKFDSIIGVDRIKVVHVNDSKNLRGAQKDRHENIGFGHIGFDALNYVVHHDTFKNIPKILETPYVGEDKKNKKPPYKLEIDMLKSQKFDPELKNKILTQ</sequence>
<proteinExistence type="inferred from homology"/>
<keyword id="KW-0227">DNA damage</keyword>
<keyword id="KW-0234">DNA repair</keyword>
<keyword id="KW-0255">Endonuclease</keyword>
<keyword id="KW-0378">Hydrolase</keyword>
<keyword id="KW-0479">Metal-binding</keyword>
<keyword id="KW-0540">Nuclease</keyword>
<keyword id="KW-0862">Zinc</keyword>